<reference key="1">
    <citation type="journal article" date="1974" name="FEBS Lett.">
        <title>The primary structure of goat and sheep pancreatic ribonucleases.</title>
        <authorList>
            <person name="Welling G.W."/>
            <person name="Scheffer A.J."/>
            <person name="Beintema J.J."/>
        </authorList>
    </citation>
    <scope>PROTEIN SEQUENCE</scope>
    <scope>GLYCOSYLATION AT ASN-34</scope>
    <source>
        <tissue>Pancreas</tissue>
    </source>
</reference>
<reference key="2">
    <citation type="journal article" date="1995" name="J. Mol. Evol.">
        <title>Molecular evolution of genes encoding ribonucleases in ruminant species.</title>
        <authorList>
            <person name="Confalone E."/>
            <person name="Beintema J.J."/>
            <person name="Sasso M.P."/>
            <person name="Carsana A."/>
            <person name="Palmieri M."/>
            <person name="Vento M.T."/>
            <person name="Furia A."/>
        </authorList>
    </citation>
    <scope>NUCLEOTIDE SEQUENCE [GENOMIC DNA]</scope>
</reference>
<feature type="chain" id="PRO_0000057187" description="Ribonuclease pancreatic">
    <location>
        <begin position="1"/>
        <end position="124"/>
    </location>
</feature>
<feature type="region of interest" description="Disordered" evidence="2">
    <location>
        <begin position="1"/>
        <end position="24"/>
    </location>
</feature>
<feature type="compositionally biased region" description="Basic and acidic residues" evidence="2">
    <location>
        <begin position="1"/>
        <end position="13"/>
    </location>
</feature>
<feature type="active site" description="Proton acceptor">
    <location>
        <position position="12"/>
    </location>
</feature>
<feature type="active site" description="Proton donor">
    <location>
        <position position="119"/>
    </location>
</feature>
<feature type="binding site">
    <location>
        <position position="7"/>
    </location>
    <ligand>
        <name>substrate</name>
    </ligand>
</feature>
<feature type="binding site">
    <location>
        <position position="10"/>
    </location>
    <ligand>
        <name>substrate</name>
    </ligand>
</feature>
<feature type="binding site">
    <location>
        <begin position="41"/>
        <end position="45"/>
    </location>
    <ligand>
        <name>substrate</name>
    </ligand>
</feature>
<feature type="binding site">
    <location>
        <position position="66"/>
    </location>
    <ligand>
        <name>substrate</name>
    </ligand>
</feature>
<feature type="binding site">
    <location>
        <position position="85"/>
    </location>
    <ligand>
        <name>substrate</name>
    </ligand>
</feature>
<feature type="glycosylation site" description="N-linked (GlcNAc...) asparagine; partial" evidence="3">
    <location>
        <position position="34"/>
    </location>
</feature>
<feature type="disulfide bond">
    <location>
        <begin position="26"/>
        <end position="84"/>
    </location>
</feature>
<feature type="disulfide bond">
    <location>
        <begin position="40"/>
        <end position="95"/>
    </location>
</feature>
<feature type="disulfide bond">
    <location>
        <begin position="58"/>
        <end position="110"/>
    </location>
</feature>
<feature type="disulfide bond">
    <location>
        <begin position="65"/>
        <end position="72"/>
    </location>
</feature>
<sequence>KESAAAKFERQHMDSSTSSASSSNYCNQMMKSRNLTQDRCKPVNTFVHESLADVQAVCSQKNVACKNGQTNCYQSYSTMSITDCRETGSSKYPNCAYKTTQAEKHIIVACEGNPYVPVHFDASV</sequence>
<keyword id="KW-0903">Direct protein sequencing</keyword>
<keyword id="KW-1015">Disulfide bond</keyword>
<keyword id="KW-0255">Endonuclease</keyword>
<keyword id="KW-0325">Glycoprotein</keyword>
<keyword id="KW-0378">Hydrolase</keyword>
<keyword id="KW-0456">Lyase</keyword>
<keyword id="KW-0540">Nuclease</keyword>
<keyword id="KW-1185">Reference proteome</keyword>
<keyword id="KW-0964">Secreted</keyword>
<proteinExistence type="evidence at protein level"/>
<evidence type="ECO:0000250" key="1"/>
<evidence type="ECO:0000256" key="2">
    <source>
        <dbReference type="SAM" id="MobiDB-lite"/>
    </source>
</evidence>
<evidence type="ECO:0000269" key="3">
    <source>
    </source>
</evidence>
<evidence type="ECO:0000305" key="4"/>
<gene>
    <name type="primary">RNASE1</name>
    <name type="synonym">RNS1</name>
</gene>
<comment type="function">
    <text evidence="1">Endonuclease that catalyzes the cleavage of RNA on the 3' side of pyrimidine nucleotides. Acts on single-stranded and double-stranded RNA (By similarity).</text>
</comment>
<comment type="catalytic activity">
    <reaction>
        <text>an [RNA] containing cytidine + H2O = an [RNA]-3'-cytidine-3'-phosphate + a 5'-hydroxy-ribonucleotide-3'-[RNA].</text>
        <dbReference type="EC" id="4.6.1.18"/>
    </reaction>
</comment>
<comment type="catalytic activity">
    <reaction>
        <text>an [RNA] containing uridine + H2O = an [RNA]-3'-uridine-3'-phosphate + a 5'-hydroxy-ribonucleotide-3'-[RNA].</text>
        <dbReference type="EC" id="4.6.1.18"/>
    </reaction>
</comment>
<comment type="subunit">
    <text evidence="1">Monomer. Interacts with and forms tight 1:1 complexes with RNH1. Dimerization of two such complexes may occur. Interaction with RNH1 inhibits this protein (By similarity).</text>
</comment>
<comment type="subcellular location">
    <subcellularLocation>
        <location>Secreted</location>
    </subcellularLocation>
</comment>
<comment type="tissue specificity">
    <text>Pancreas.</text>
</comment>
<comment type="similarity">
    <text evidence="4">Belongs to the pancreatic ribonuclease family.</text>
</comment>
<organism>
    <name type="scientific">Capra hircus</name>
    <name type="common">Goat</name>
    <dbReference type="NCBI Taxonomy" id="9925"/>
    <lineage>
        <taxon>Eukaryota</taxon>
        <taxon>Metazoa</taxon>
        <taxon>Chordata</taxon>
        <taxon>Craniata</taxon>
        <taxon>Vertebrata</taxon>
        <taxon>Euteleostomi</taxon>
        <taxon>Mammalia</taxon>
        <taxon>Eutheria</taxon>
        <taxon>Laurasiatheria</taxon>
        <taxon>Artiodactyla</taxon>
        <taxon>Ruminantia</taxon>
        <taxon>Pecora</taxon>
        <taxon>Bovidae</taxon>
        <taxon>Caprinae</taxon>
        <taxon>Capra</taxon>
    </lineage>
</organism>
<protein>
    <recommendedName>
        <fullName>Ribonuclease pancreatic</fullName>
        <ecNumber>4.6.1.18</ecNumber>
    </recommendedName>
    <alternativeName>
        <fullName>RNase 1</fullName>
    </alternativeName>
    <alternativeName>
        <fullName>RNase A</fullName>
    </alternativeName>
</protein>
<name>RNAS1_CAPHI</name>
<accession>P67926</accession>
<accession>P00661</accession>
<accession>P04420</accession>
<dbReference type="EC" id="4.6.1.18"/>
<dbReference type="EMBL" id="S81742">
    <property type="protein sequence ID" value="AAB36136.1"/>
    <property type="molecule type" value="Genomic_DNA"/>
</dbReference>
<dbReference type="PIR" id="A00810">
    <property type="entry name" value="NRGT"/>
</dbReference>
<dbReference type="SMR" id="P67926"/>
<dbReference type="STRING" id="9925.ENSCHIP00000011318"/>
<dbReference type="GlyCosmos" id="P67926">
    <property type="glycosylation" value="1 site, No reported glycans"/>
</dbReference>
<dbReference type="iPTMnet" id="P67926"/>
<dbReference type="Proteomes" id="UP000291000">
    <property type="component" value="Unassembled WGS sequence"/>
</dbReference>
<dbReference type="Proteomes" id="UP000694566">
    <property type="component" value="Unplaced"/>
</dbReference>
<dbReference type="GO" id="GO:0005576">
    <property type="term" value="C:extracellular region"/>
    <property type="evidence" value="ECO:0007669"/>
    <property type="project" value="UniProtKB-SubCell"/>
</dbReference>
<dbReference type="GO" id="GO:0016829">
    <property type="term" value="F:lyase activity"/>
    <property type="evidence" value="ECO:0007669"/>
    <property type="project" value="UniProtKB-KW"/>
</dbReference>
<dbReference type="GO" id="GO:0003676">
    <property type="term" value="F:nucleic acid binding"/>
    <property type="evidence" value="ECO:0007669"/>
    <property type="project" value="InterPro"/>
</dbReference>
<dbReference type="GO" id="GO:0004522">
    <property type="term" value="F:ribonuclease A activity"/>
    <property type="evidence" value="ECO:0007669"/>
    <property type="project" value="UniProtKB-EC"/>
</dbReference>
<dbReference type="GO" id="GO:0050830">
    <property type="term" value="P:defense response to Gram-positive bacterium"/>
    <property type="evidence" value="ECO:0007669"/>
    <property type="project" value="TreeGrafter"/>
</dbReference>
<dbReference type="CDD" id="cd06265">
    <property type="entry name" value="RNase_A_canonical"/>
    <property type="match status" value="1"/>
</dbReference>
<dbReference type="FunFam" id="3.10.130.10:FF:000001">
    <property type="entry name" value="Ribonuclease pancreatic"/>
    <property type="match status" value="1"/>
</dbReference>
<dbReference type="Gene3D" id="3.10.130.10">
    <property type="entry name" value="Ribonuclease A-like domain"/>
    <property type="match status" value="1"/>
</dbReference>
<dbReference type="InterPro" id="IPR001427">
    <property type="entry name" value="RNaseA"/>
</dbReference>
<dbReference type="InterPro" id="IPR036816">
    <property type="entry name" value="RNaseA-like_dom_sf"/>
</dbReference>
<dbReference type="InterPro" id="IPR023411">
    <property type="entry name" value="RNaseA_AS"/>
</dbReference>
<dbReference type="InterPro" id="IPR023412">
    <property type="entry name" value="RNaseA_domain"/>
</dbReference>
<dbReference type="PANTHER" id="PTHR11437">
    <property type="entry name" value="RIBONUCLEASE"/>
    <property type="match status" value="1"/>
</dbReference>
<dbReference type="PANTHER" id="PTHR11437:SF24">
    <property type="entry name" value="RIBONUCLEASE PANCREATIC"/>
    <property type="match status" value="1"/>
</dbReference>
<dbReference type="Pfam" id="PF00074">
    <property type="entry name" value="RnaseA"/>
    <property type="match status" value="1"/>
</dbReference>
<dbReference type="PRINTS" id="PR00794">
    <property type="entry name" value="RIBONUCLEASE"/>
</dbReference>
<dbReference type="SMART" id="SM00092">
    <property type="entry name" value="RNAse_Pc"/>
    <property type="match status" value="1"/>
</dbReference>
<dbReference type="SUPFAM" id="SSF54076">
    <property type="entry name" value="RNase A-like"/>
    <property type="match status" value="1"/>
</dbReference>
<dbReference type="PROSITE" id="PS00127">
    <property type="entry name" value="RNASE_PANCREATIC"/>
    <property type="match status" value="1"/>
</dbReference>